<accession>P0C6H9</accession>
<reference key="1">
    <citation type="journal article" date="1990" name="Virology">
        <title>Active hepatitis B virus replication in the presence of anti-HBe is associated with viral variants containing an inactive pre-C region.</title>
        <authorList>
            <person name="Tong S."/>
            <person name="Li J."/>
            <person name="Vitvitski L."/>
            <person name="Trepo C."/>
        </authorList>
    </citation>
    <scope>NUCLEOTIDE SEQUENCE [GENOMIC DNA]</scope>
</reference>
<dbReference type="EMBL" id="M32138">
    <property type="status" value="NOT_ANNOTATED_CDS"/>
    <property type="molecule type" value="Genomic_DNA"/>
</dbReference>
<dbReference type="Proteomes" id="UP000007929">
    <property type="component" value="Segment"/>
</dbReference>
<dbReference type="GO" id="GO:0005198">
    <property type="term" value="F:structural molecule activity"/>
    <property type="evidence" value="ECO:0007669"/>
    <property type="project" value="InterPro"/>
</dbReference>
<dbReference type="InterPro" id="IPR013195">
    <property type="entry name" value="Hepatitis_B_virus_capsid_N"/>
</dbReference>
<dbReference type="Pfam" id="PF08290">
    <property type="entry name" value="Hep_core_N"/>
    <property type="match status" value="1"/>
</dbReference>
<feature type="chain" id="PRO_0000324723" description="Truncated HBeAg protein">
    <location>
        <begin position="1"/>
        <end position="27"/>
    </location>
</feature>
<name>HBEAG_HBVD2</name>
<sequence>MQLFHLCLIISCSCPTVQASKLCLGWL</sequence>
<organismHost>
    <name type="scientific">Homo sapiens</name>
    <name type="common">Human</name>
    <dbReference type="NCBI Taxonomy" id="9606"/>
</organismHost>
<organismHost>
    <name type="scientific">Pan troglodytes</name>
    <name type="common">Chimpanzee</name>
    <dbReference type="NCBI Taxonomy" id="9598"/>
</organismHost>
<organism>
    <name type="scientific">Hepatitis B virus genotype D (isolate France/alpha1/1989)</name>
    <name type="common">HBV-D</name>
    <dbReference type="NCBI Taxonomy" id="10411"/>
    <lineage>
        <taxon>Viruses</taxon>
        <taxon>Riboviria</taxon>
        <taxon>Pararnavirae</taxon>
        <taxon>Artverviricota</taxon>
        <taxon>Revtraviricetes</taxon>
        <taxon>Blubervirales</taxon>
        <taxon>Hepadnaviridae</taxon>
        <taxon>Orthohepadnavirus</taxon>
        <taxon>Hepatitis B virus</taxon>
    </lineage>
</organism>
<comment type="alternative products">
    <event type="alternative initiation"/>
    <isoform>
        <id>P0C6H9-1</id>
        <name>External core antigen</name>
        <sequence type="displayed"/>
    </isoform>
    <isoform>
        <id>P24023-1</id>
        <name>Capsid protein</name>
        <sequence type="external"/>
    </isoform>
</comment>
<comment type="miscellaneous">
    <text>This virus has been isolated from a low active healthy carrier of HBV, negative for HBeAg. A genomic mutation in 1898 creates a stop codon at position 28 of HBeAg, without affecting capsid open reading frame. The HBeAg negative variants of HBV are associated with fulminant hepatitis, but can also be found in patients with persistent infection and chronic hepatitis.</text>
</comment>
<keyword id="KW-0024">Alternative initiation</keyword>
<protein>
    <recommendedName>
        <fullName>Truncated HBeAg protein</fullName>
    </recommendedName>
</protein>
<proteinExistence type="predicted"/>
<gene>
    <name type="primary">C</name>
</gene>